<keyword id="KW-0004">4Fe-4S</keyword>
<keyword id="KW-0067">ATP-binding</keyword>
<keyword id="KW-0963">Cytoplasm</keyword>
<keyword id="KW-0408">Iron</keyword>
<keyword id="KW-0411">Iron-sulfur</keyword>
<keyword id="KW-0460">Magnesium</keyword>
<keyword id="KW-0479">Metal-binding</keyword>
<keyword id="KW-0547">Nucleotide-binding</keyword>
<keyword id="KW-0694">RNA-binding</keyword>
<keyword id="KW-0808">Transferase</keyword>
<keyword id="KW-0819">tRNA processing</keyword>
<keyword id="KW-0820">tRNA-binding</keyword>
<proteinExistence type="inferred from homology"/>
<gene>
    <name evidence="1" type="primary">ttcA</name>
    <name type="ordered locus">SPAB_01611</name>
</gene>
<dbReference type="EC" id="2.8.1.-" evidence="1"/>
<dbReference type="EMBL" id="CP000886">
    <property type="protein sequence ID" value="ABX67007.1"/>
    <property type="molecule type" value="Genomic_DNA"/>
</dbReference>
<dbReference type="RefSeq" id="WP_001156211.1">
    <property type="nucleotide sequence ID" value="NC_010102.1"/>
</dbReference>
<dbReference type="SMR" id="A9MXN4"/>
<dbReference type="KEGG" id="spq:SPAB_01611"/>
<dbReference type="PATRIC" id="fig|1016998.12.peg.1516"/>
<dbReference type="HOGENOM" id="CLU_026481_0_0_6"/>
<dbReference type="BioCyc" id="SENT1016998:SPAB_RS06550-MONOMER"/>
<dbReference type="Proteomes" id="UP000008556">
    <property type="component" value="Chromosome"/>
</dbReference>
<dbReference type="GO" id="GO:0005737">
    <property type="term" value="C:cytoplasm"/>
    <property type="evidence" value="ECO:0007669"/>
    <property type="project" value="UniProtKB-SubCell"/>
</dbReference>
<dbReference type="GO" id="GO:0051539">
    <property type="term" value="F:4 iron, 4 sulfur cluster binding"/>
    <property type="evidence" value="ECO:0007669"/>
    <property type="project" value="UniProtKB-UniRule"/>
</dbReference>
<dbReference type="GO" id="GO:0005524">
    <property type="term" value="F:ATP binding"/>
    <property type="evidence" value="ECO:0007669"/>
    <property type="project" value="UniProtKB-UniRule"/>
</dbReference>
<dbReference type="GO" id="GO:0000287">
    <property type="term" value="F:magnesium ion binding"/>
    <property type="evidence" value="ECO:0007669"/>
    <property type="project" value="UniProtKB-UniRule"/>
</dbReference>
<dbReference type="GO" id="GO:0016783">
    <property type="term" value="F:sulfurtransferase activity"/>
    <property type="evidence" value="ECO:0007669"/>
    <property type="project" value="UniProtKB-UniRule"/>
</dbReference>
<dbReference type="GO" id="GO:0000049">
    <property type="term" value="F:tRNA binding"/>
    <property type="evidence" value="ECO:0007669"/>
    <property type="project" value="UniProtKB-KW"/>
</dbReference>
<dbReference type="GO" id="GO:0034227">
    <property type="term" value="P:tRNA thio-modification"/>
    <property type="evidence" value="ECO:0007669"/>
    <property type="project" value="UniProtKB-UniRule"/>
</dbReference>
<dbReference type="CDD" id="cd24138">
    <property type="entry name" value="TtcA-like"/>
    <property type="match status" value="1"/>
</dbReference>
<dbReference type="FunFam" id="3.40.50.620:FF:000046">
    <property type="entry name" value="tRNA-cytidine(32) 2-sulfurtransferase"/>
    <property type="match status" value="1"/>
</dbReference>
<dbReference type="Gene3D" id="3.40.50.620">
    <property type="entry name" value="HUPs"/>
    <property type="match status" value="1"/>
</dbReference>
<dbReference type="HAMAP" id="MF_01850">
    <property type="entry name" value="TtcA"/>
    <property type="match status" value="1"/>
</dbReference>
<dbReference type="InterPro" id="IPR014729">
    <property type="entry name" value="Rossmann-like_a/b/a_fold"/>
</dbReference>
<dbReference type="InterPro" id="IPR011063">
    <property type="entry name" value="TilS/TtcA_N"/>
</dbReference>
<dbReference type="InterPro" id="IPR012089">
    <property type="entry name" value="tRNA_Cyd_32_2_STrfase"/>
</dbReference>
<dbReference type="InterPro" id="IPR035107">
    <property type="entry name" value="tRNA_thiolation_TtcA_Ctu1"/>
</dbReference>
<dbReference type="NCBIfam" id="NF007972">
    <property type="entry name" value="PRK10696.1"/>
    <property type="match status" value="1"/>
</dbReference>
<dbReference type="PANTHER" id="PTHR43686:SF1">
    <property type="entry name" value="AMINOTRAN_5 DOMAIN-CONTAINING PROTEIN"/>
    <property type="match status" value="1"/>
</dbReference>
<dbReference type="PANTHER" id="PTHR43686">
    <property type="entry name" value="SULFURTRANSFERASE-RELATED"/>
    <property type="match status" value="1"/>
</dbReference>
<dbReference type="Pfam" id="PF01171">
    <property type="entry name" value="ATP_bind_3"/>
    <property type="match status" value="1"/>
</dbReference>
<dbReference type="PIRSF" id="PIRSF004976">
    <property type="entry name" value="ATPase_YdaO"/>
    <property type="match status" value="1"/>
</dbReference>
<dbReference type="SUPFAM" id="SSF52402">
    <property type="entry name" value="Adenine nucleotide alpha hydrolases-like"/>
    <property type="match status" value="1"/>
</dbReference>
<comment type="function">
    <text evidence="1">Catalyzes the ATP-dependent 2-thiolation of cytidine in position 32 of tRNA, to form 2-thiocytidine (s(2)C32). The sulfur atoms are provided by the cysteine/cysteine desulfurase (IscS) system.</text>
</comment>
<comment type="catalytic activity">
    <reaction evidence="1">
        <text>cytidine(32) in tRNA + S-sulfanyl-L-cysteinyl-[cysteine desulfurase] + AH2 + ATP = 2-thiocytidine(32) in tRNA + L-cysteinyl-[cysteine desulfurase] + A + AMP + diphosphate + H(+)</text>
        <dbReference type="Rhea" id="RHEA:57048"/>
        <dbReference type="Rhea" id="RHEA-COMP:10288"/>
        <dbReference type="Rhea" id="RHEA-COMP:12157"/>
        <dbReference type="Rhea" id="RHEA-COMP:12158"/>
        <dbReference type="Rhea" id="RHEA-COMP:14821"/>
        <dbReference type="ChEBI" id="CHEBI:13193"/>
        <dbReference type="ChEBI" id="CHEBI:15378"/>
        <dbReference type="ChEBI" id="CHEBI:17499"/>
        <dbReference type="ChEBI" id="CHEBI:29950"/>
        <dbReference type="ChEBI" id="CHEBI:30616"/>
        <dbReference type="ChEBI" id="CHEBI:33019"/>
        <dbReference type="ChEBI" id="CHEBI:61963"/>
        <dbReference type="ChEBI" id="CHEBI:82748"/>
        <dbReference type="ChEBI" id="CHEBI:141453"/>
        <dbReference type="ChEBI" id="CHEBI:456215"/>
    </reaction>
    <physiologicalReaction direction="left-to-right" evidence="1">
        <dbReference type="Rhea" id="RHEA:57049"/>
    </physiologicalReaction>
</comment>
<comment type="cofactor">
    <cofactor evidence="1">
        <name>Mg(2+)</name>
        <dbReference type="ChEBI" id="CHEBI:18420"/>
    </cofactor>
</comment>
<comment type="cofactor">
    <cofactor evidence="1">
        <name>[4Fe-4S] cluster</name>
        <dbReference type="ChEBI" id="CHEBI:49883"/>
    </cofactor>
    <text evidence="1">Binds 1 [4Fe-4S] cluster per subunit. The cluster is chelated by three Cys residues, the fourth Fe has a free coordination site that may bind a sulfur atom transferred from the persulfide of IscS.</text>
</comment>
<comment type="pathway">
    <text evidence="1">tRNA modification.</text>
</comment>
<comment type="subunit">
    <text evidence="1">Homodimer.</text>
</comment>
<comment type="subcellular location">
    <subcellularLocation>
        <location evidence="1">Cytoplasm</location>
    </subcellularLocation>
</comment>
<comment type="miscellaneous">
    <text evidence="1">The thiolation reaction likely consists of two steps: a first activation step by ATP to form an adenylated intermediate of the target base of tRNA, and a second nucleophilic substitution step of the sulfur (S) atom supplied by the hydrosulfide attached to the Fe-S cluster.</text>
</comment>
<comment type="similarity">
    <text evidence="1">Belongs to the TtcA family.</text>
</comment>
<reference key="1">
    <citation type="submission" date="2007-11" db="EMBL/GenBank/DDBJ databases">
        <authorList>
            <consortium name="The Salmonella enterica serovar Paratyphi B Genome Sequencing Project"/>
            <person name="McClelland M."/>
            <person name="Sanderson E.K."/>
            <person name="Porwollik S."/>
            <person name="Spieth J."/>
            <person name="Clifton W.S."/>
            <person name="Fulton R."/>
            <person name="Cordes M."/>
            <person name="Wollam A."/>
            <person name="Shah N."/>
            <person name="Pepin K."/>
            <person name="Bhonagiri V."/>
            <person name="Nash W."/>
            <person name="Johnson M."/>
            <person name="Thiruvilangam P."/>
            <person name="Wilson R."/>
        </authorList>
    </citation>
    <scope>NUCLEOTIDE SEQUENCE [LARGE SCALE GENOMIC DNA]</scope>
    <source>
        <strain>ATCC BAA-1250 / SPB7</strain>
    </source>
</reference>
<name>TTCA_SALPB</name>
<accession>A9MXN4</accession>
<feature type="chain" id="PRO_0000348827" description="tRNA-cytidine(32) 2-sulfurtransferase">
    <location>
        <begin position="1"/>
        <end position="311"/>
    </location>
</feature>
<feature type="short sequence motif" description="PP-loop motif" evidence="1">
    <location>
        <begin position="47"/>
        <end position="52"/>
    </location>
</feature>
<feature type="binding site" evidence="1">
    <location>
        <position position="122"/>
    </location>
    <ligand>
        <name>[4Fe-4S] cluster</name>
        <dbReference type="ChEBI" id="CHEBI:49883"/>
    </ligand>
</feature>
<feature type="binding site" evidence="1">
    <location>
        <position position="125"/>
    </location>
    <ligand>
        <name>[4Fe-4S] cluster</name>
        <dbReference type="ChEBI" id="CHEBI:49883"/>
    </ligand>
</feature>
<feature type="binding site" evidence="1">
    <location>
        <position position="213"/>
    </location>
    <ligand>
        <name>[4Fe-4S] cluster</name>
        <dbReference type="ChEBI" id="CHEBI:49883"/>
    </ligand>
</feature>
<evidence type="ECO:0000255" key="1">
    <source>
        <dbReference type="HAMAP-Rule" id="MF_01850"/>
    </source>
</evidence>
<sequence length="311" mass="35360">MQEIQKNTKKEQYNLNKLQKRLRRNVGEAIADFNMIEEGDRIMVCLSGGKDSYTMLEILRNLQQSAPINFSLVAVNLDQKQPGFPEHILPAYLEQLGVEYKIVEENTYGIVKEKIPEGKTTCSLCSRLRRGILYRTATELGATKIALGHHRDDILQTLFLNMFYGGKMKGMPPKLMSDDGKHIVIRPLAYCREKDIIRFAEAKAFPIIPCNLCGSQPNLQRQVIADMLRDWDKRYPGRIETMFSAMQNVVPSHLCDTNLFDFKGITHGSEVVDGGDLAFDREEIPLQPAGWQPEEDDTSVEALRLDVIEVK</sequence>
<organism>
    <name type="scientific">Salmonella paratyphi B (strain ATCC BAA-1250 / SPB7)</name>
    <dbReference type="NCBI Taxonomy" id="1016998"/>
    <lineage>
        <taxon>Bacteria</taxon>
        <taxon>Pseudomonadati</taxon>
        <taxon>Pseudomonadota</taxon>
        <taxon>Gammaproteobacteria</taxon>
        <taxon>Enterobacterales</taxon>
        <taxon>Enterobacteriaceae</taxon>
        <taxon>Salmonella</taxon>
    </lineage>
</organism>
<protein>
    <recommendedName>
        <fullName evidence="1">tRNA-cytidine(32) 2-sulfurtransferase</fullName>
        <ecNumber evidence="1">2.8.1.-</ecNumber>
    </recommendedName>
    <alternativeName>
        <fullName evidence="1">Two-thiocytidine biosynthesis protein A</fullName>
    </alternativeName>
    <alternativeName>
        <fullName evidence="1">tRNA 2-thiocytidine biosynthesis protein TtcA</fullName>
    </alternativeName>
</protein>